<organism>
    <name type="scientific">Beutenbergia cavernae (strain ATCC BAA-8 / DSM 12333 / CCUG 43141 / JCM 11478 / NBRC 16432 / NCIMB 13614 / HKI 0122)</name>
    <dbReference type="NCBI Taxonomy" id="471853"/>
    <lineage>
        <taxon>Bacteria</taxon>
        <taxon>Bacillati</taxon>
        <taxon>Actinomycetota</taxon>
        <taxon>Actinomycetes</taxon>
        <taxon>Micrococcales</taxon>
        <taxon>Beutenbergiaceae</taxon>
        <taxon>Beutenbergia</taxon>
    </lineage>
</organism>
<sequence length="153" mass="16345">MAARRKARKRALDLLYEADQKAVSGGAPASGDAVALLAERIATPHGEAPMREYTVEIVEGVAAHQARIDELLETYAQGWSLERMPAVDRAILRIGVWELLFNDDVPDAVAVDEAVALAAELSTDDSPTFVNGLLGQLLRLAPVLRDEEAAAGG</sequence>
<feature type="chain" id="PRO_1000202472" description="Transcription antitermination protein NusB">
    <location>
        <begin position="1"/>
        <end position="153"/>
    </location>
</feature>
<proteinExistence type="inferred from homology"/>
<comment type="function">
    <text evidence="1">Involved in transcription antitermination. Required for transcription of ribosomal RNA (rRNA) genes. Binds specifically to the boxA antiterminator sequence of the ribosomal RNA (rrn) operons.</text>
</comment>
<comment type="similarity">
    <text evidence="1">Belongs to the NusB family.</text>
</comment>
<gene>
    <name evidence="1" type="primary">nusB</name>
    <name type="ordered locus">Bcav_2032</name>
</gene>
<name>NUSB_BEUC1</name>
<accession>C5C681</accession>
<protein>
    <recommendedName>
        <fullName evidence="1">Transcription antitermination protein NusB</fullName>
    </recommendedName>
    <alternativeName>
        <fullName evidence="1">Antitermination factor NusB</fullName>
    </alternativeName>
</protein>
<keyword id="KW-1185">Reference proteome</keyword>
<keyword id="KW-0694">RNA-binding</keyword>
<keyword id="KW-0804">Transcription</keyword>
<keyword id="KW-0889">Transcription antitermination</keyword>
<keyword id="KW-0805">Transcription regulation</keyword>
<dbReference type="EMBL" id="CP001618">
    <property type="protein sequence ID" value="ACQ80287.1"/>
    <property type="molecule type" value="Genomic_DNA"/>
</dbReference>
<dbReference type="RefSeq" id="WP_015882527.1">
    <property type="nucleotide sequence ID" value="NC_012669.1"/>
</dbReference>
<dbReference type="SMR" id="C5C681"/>
<dbReference type="STRING" id="471853.Bcav_2032"/>
<dbReference type="KEGG" id="bcv:Bcav_2032"/>
<dbReference type="eggNOG" id="COG0781">
    <property type="taxonomic scope" value="Bacteria"/>
</dbReference>
<dbReference type="HOGENOM" id="CLU_087843_2_3_11"/>
<dbReference type="OrthoDB" id="3528057at2"/>
<dbReference type="Proteomes" id="UP000007962">
    <property type="component" value="Chromosome"/>
</dbReference>
<dbReference type="GO" id="GO:0005829">
    <property type="term" value="C:cytosol"/>
    <property type="evidence" value="ECO:0007669"/>
    <property type="project" value="TreeGrafter"/>
</dbReference>
<dbReference type="GO" id="GO:0003723">
    <property type="term" value="F:RNA binding"/>
    <property type="evidence" value="ECO:0007669"/>
    <property type="project" value="UniProtKB-UniRule"/>
</dbReference>
<dbReference type="GO" id="GO:0006353">
    <property type="term" value="P:DNA-templated transcription termination"/>
    <property type="evidence" value="ECO:0007669"/>
    <property type="project" value="UniProtKB-UniRule"/>
</dbReference>
<dbReference type="GO" id="GO:0031564">
    <property type="term" value="P:transcription antitermination"/>
    <property type="evidence" value="ECO:0007669"/>
    <property type="project" value="UniProtKB-KW"/>
</dbReference>
<dbReference type="Gene3D" id="1.10.940.10">
    <property type="entry name" value="NusB-like"/>
    <property type="match status" value="1"/>
</dbReference>
<dbReference type="HAMAP" id="MF_00073">
    <property type="entry name" value="NusB"/>
    <property type="match status" value="1"/>
</dbReference>
<dbReference type="InterPro" id="IPR035926">
    <property type="entry name" value="NusB-like_sf"/>
</dbReference>
<dbReference type="InterPro" id="IPR011605">
    <property type="entry name" value="NusB_fam"/>
</dbReference>
<dbReference type="InterPro" id="IPR006027">
    <property type="entry name" value="NusB_RsmB_TIM44"/>
</dbReference>
<dbReference type="NCBIfam" id="TIGR01951">
    <property type="entry name" value="nusB"/>
    <property type="match status" value="1"/>
</dbReference>
<dbReference type="PANTHER" id="PTHR11078:SF3">
    <property type="entry name" value="ANTITERMINATION NUSB DOMAIN-CONTAINING PROTEIN"/>
    <property type="match status" value="1"/>
</dbReference>
<dbReference type="PANTHER" id="PTHR11078">
    <property type="entry name" value="N UTILIZATION SUBSTANCE PROTEIN B-RELATED"/>
    <property type="match status" value="1"/>
</dbReference>
<dbReference type="Pfam" id="PF01029">
    <property type="entry name" value="NusB"/>
    <property type="match status" value="1"/>
</dbReference>
<dbReference type="SUPFAM" id="SSF48013">
    <property type="entry name" value="NusB-like"/>
    <property type="match status" value="1"/>
</dbReference>
<reference key="1">
    <citation type="journal article" date="2009" name="Stand. Genomic Sci.">
        <title>Complete genome sequence of Beutenbergia cavernae type strain (HKI 0122).</title>
        <authorList>
            <person name="Land M."/>
            <person name="Pukall R."/>
            <person name="Abt B."/>
            <person name="Goker M."/>
            <person name="Rohde M."/>
            <person name="Glavina Del Rio T."/>
            <person name="Tice H."/>
            <person name="Copeland A."/>
            <person name="Cheng J.F."/>
            <person name="Lucas S."/>
            <person name="Chen F."/>
            <person name="Nolan M."/>
            <person name="Bruce D."/>
            <person name="Goodwin L."/>
            <person name="Pitluck S."/>
            <person name="Ivanova N."/>
            <person name="Mavromatis K."/>
            <person name="Ovchinnikova G."/>
            <person name="Pati A."/>
            <person name="Chen A."/>
            <person name="Palaniappan K."/>
            <person name="Hauser L."/>
            <person name="Chang Y.J."/>
            <person name="Jefferies C.C."/>
            <person name="Saunders E."/>
            <person name="Brettin T."/>
            <person name="Detter J.C."/>
            <person name="Han C."/>
            <person name="Chain P."/>
            <person name="Bristow J."/>
            <person name="Eisen J.A."/>
            <person name="Markowitz V."/>
            <person name="Hugenholtz P."/>
            <person name="Kyrpides N.C."/>
            <person name="Klenk H.P."/>
            <person name="Lapidus A."/>
        </authorList>
    </citation>
    <scope>NUCLEOTIDE SEQUENCE [LARGE SCALE GENOMIC DNA]</scope>
    <source>
        <strain>ATCC BAA-8 / DSM 12333 / CCUG 43141 / JCM 11478 / NBRC 16432 / NCIMB 13614 / HKI 0122</strain>
    </source>
</reference>
<evidence type="ECO:0000255" key="1">
    <source>
        <dbReference type="HAMAP-Rule" id="MF_00073"/>
    </source>
</evidence>